<name>YBEY_CHLTA</name>
<keyword id="KW-0963">Cytoplasm</keyword>
<keyword id="KW-0255">Endonuclease</keyword>
<keyword id="KW-0378">Hydrolase</keyword>
<keyword id="KW-0479">Metal-binding</keyword>
<keyword id="KW-0540">Nuclease</keyword>
<keyword id="KW-0690">Ribosome biogenesis</keyword>
<keyword id="KW-0698">rRNA processing</keyword>
<keyword id="KW-0862">Zinc</keyword>
<evidence type="ECO:0000255" key="1">
    <source>
        <dbReference type="HAMAP-Rule" id="MF_00009"/>
    </source>
</evidence>
<reference key="1">
    <citation type="journal article" date="2005" name="Infect. Immun.">
        <title>Comparative genomic analysis of Chlamydia trachomatis oculotropic and genitotropic strains.</title>
        <authorList>
            <person name="Carlson J.H."/>
            <person name="Porcella S.F."/>
            <person name="McClarty G."/>
            <person name="Caldwell H.D."/>
        </authorList>
    </citation>
    <scope>NUCLEOTIDE SEQUENCE [LARGE SCALE GENOMIC DNA]</scope>
    <source>
        <strain>ATCC VR-571B / DSM 19440 / HAR-13</strain>
    </source>
</reference>
<feature type="chain" id="PRO_0000284182" description="Endoribonuclease YbeY">
    <location>
        <begin position="1"/>
        <end position="161"/>
    </location>
</feature>
<feature type="binding site" evidence="1">
    <location>
        <position position="120"/>
    </location>
    <ligand>
        <name>Zn(2+)</name>
        <dbReference type="ChEBI" id="CHEBI:29105"/>
        <note>catalytic</note>
    </ligand>
</feature>
<feature type="binding site" evidence="1">
    <location>
        <position position="124"/>
    </location>
    <ligand>
        <name>Zn(2+)</name>
        <dbReference type="ChEBI" id="CHEBI:29105"/>
        <note>catalytic</note>
    </ligand>
</feature>
<feature type="binding site" evidence="1">
    <location>
        <position position="130"/>
    </location>
    <ligand>
        <name>Zn(2+)</name>
        <dbReference type="ChEBI" id="CHEBI:29105"/>
        <note>catalytic</note>
    </ligand>
</feature>
<proteinExistence type="inferred from homology"/>
<gene>
    <name evidence="1" type="primary">ybeY</name>
    <name type="ordered locus">CTA_0461</name>
</gene>
<protein>
    <recommendedName>
        <fullName evidence="1">Endoribonuclease YbeY</fullName>
        <ecNumber evidence="1">3.1.-.-</ecNumber>
    </recommendedName>
</protein>
<comment type="function">
    <text evidence="1">Single strand-specific metallo-endoribonuclease involved in late-stage 70S ribosome quality control and in maturation of the 3' terminus of the 16S rRNA.</text>
</comment>
<comment type="cofactor">
    <cofactor evidence="1">
        <name>Zn(2+)</name>
        <dbReference type="ChEBI" id="CHEBI:29105"/>
    </cofactor>
    <text evidence="1">Binds 1 zinc ion.</text>
</comment>
<comment type="subcellular location">
    <subcellularLocation>
        <location evidence="1">Cytoplasm</location>
    </subcellularLocation>
</comment>
<comment type="similarity">
    <text evidence="1">Belongs to the endoribonuclease YbeY family.</text>
</comment>
<accession>Q3KLS9</accession>
<organism>
    <name type="scientific">Chlamydia trachomatis serovar A (strain ATCC VR-571B / DSM 19440 / HAR-13)</name>
    <dbReference type="NCBI Taxonomy" id="315277"/>
    <lineage>
        <taxon>Bacteria</taxon>
        <taxon>Pseudomonadati</taxon>
        <taxon>Chlamydiota</taxon>
        <taxon>Chlamydiia</taxon>
        <taxon>Chlamydiales</taxon>
        <taxon>Chlamydiaceae</taxon>
        <taxon>Chlamydia/Chlamydophila group</taxon>
        <taxon>Chlamydia</taxon>
    </lineage>
</organism>
<dbReference type="EC" id="3.1.-.-" evidence="1"/>
<dbReference type="EMBL" id="CP000051">
    <property type="protein sequence ID" value="AAX50693.1"/>
    <property type="molecule type" value="Genomic_DNA"/>
</dbReference>
<dbReference type="RefSeq" id="WP_009871776.1">
    <property type="nucleotide sequence ID" value="NC_007429.1"/>
</dbReference>
<dbReference type="SMR" id="Q3KLS9"/>
<dbReference type="KEGG" id="cta:CTA_0461"/>
<dbReference type="HOGENOM" id="CLU_106710_2_0_0"/>
<dbReference type="Proteomes" id="UP000002532">
    <property type="component" value="Chromosome"/>
</dbReference>
<dbReference type="GO" id="GO:0005737">
    <property type="term" value="C:cytoplasm"/>
    <property type="evidence" value="ECO:0007669"/>
    <property type="project" value="UniProtKB-SubCell"/>
</dbReference>
<dbReference type="GO" id="GO:0004222">
    <property type="term" value="F:metalloendopeptidase activity"/>
    <property type="evidence" value="ECO:0007669"/>
    <property type="project" value="InterPro"/>
</dbReference>
<dbReference type="GO" id="GO:0004521">
    <property type="term" value="F:RNA endonuclease activity"/>
    <property type="evidence" value="ECO:0007669"/>
    <property type="project" value="UniProtKB-UniRule"/>
</dbReference>
<dbReference type="GO" id="GO:0008270">
    <property type="term" value="F:zinc ion binding"/>
    <property type="evidence" value="ECO:0007669"/>
    <property type="project" value="UniProtKB-UniRule"/>
</dbReference>
<dbReference type="GO" id="GO:0006364">
    <property type="term" value="P:rRNA processing"/>
    <property type="evidence" value="ECO:0007669"/>
    <property type="project" value="UniProtKB-UniRule"/>
</dbReference>
<dbReference type="Gene3D" id="3.40.390.30">
    <property type="entry name" value="Metalloproteases ('zincins'), catalytic domain"/>
    <property type="match status" value="1"/>
</dbReference>
<dbReference type="HAMAP" id="MF_00009">
    <property type="entry name" value="Endoribonucl_YbeY"/>
    <property type="match status" value="1"/>
</dbReference>
<dbReference type="InterPro" id="IPR023091">
    <property type="entry name" value="MetalPrtase_cat_dom_sf_prd"/>
</dbReference>
<dbReference type="InterPro" id="IPR002036">
    <property type="entry name" value="YbeY"/>
</dbReference>
<dbReference type="NCBIfam" id="TIGR00043">
    <property type="entry name" value="rRNA maturation RNase YbeY"/>
    <property type="match status" value="1"/>
</dbReference>
<dbReference type="Pfam" id="PF02130">
    <property type="entry name" value="YbeY"/>
    <property type="match status" value="1"/>
</dbReference>
<dbReference type="SUPFAM" id="SSF55486">
    <property type="entry name" value="Metalloproteases ('zincins'), catalytic domain"/>
    <property type="match status" value="1"/>
</dbReference>
<sequence>MLILDRSSPQIFISNEQQDVSIDLQSAQRLVVLFLELQKVSTDQVYVYFLDDTALAQLHDEQFSDPSPTDTITLPIDKPGIASFPHVLGEAFVSPKAAMRFLEQYTEDQLYHEISRYVVHSLLHMLGYDDQTDEDKRIMQEQEDVSLSFLAEHQALLRPAV</sequence>